<dbReference type="EMBL" id="AK045250">
    <property type="protein sequence ID" value="BAC32280.1"/>
    <property type="molecule type" value="mRNA"/>
</dbReference>
<dbReference type="EMBL" id="AK077423">
    <property type="protein sequence ID" value="BAC36793.1"/>
    <property type="molecule type" value="mRNA"/>
</dbReference>
<dbReference type="EMBL" id="AK170354">
    <property type="protein sequence ID" value="BAE41740.1"/>
    <property type="molecule type" value="mRNA"/>
</dbReference>
<dbReference type="CCDS" id="CCDS49737.1"/>
<dbReference type="RefSeq" id="NP_663600.2">
    <property type="nucleotide sequence ID" value="NM_145625.3"/>
</dbReference>
<dbReference type="SMR" id="Q8BGD9"/>
<dbReference type="BioGRID" id="217684">
    <property type="interactions" value="30"/>
</dbReference>
<dbReference type="FunCoup" id="Q8BGD9">
    <property type="interactions" value="2478"/>
</dbReference>
<dbReference type="IntAct" id="Q8BGD9">
    <property type="interactions" value="4"/>
</dbReference>
<dbReference type="MINT" id="Q8BGD9"/>
<dbReference type="STRING" id="10090.ENSMUSP00000127774"/>
<dbReference type="GlyGen" id="Q8BGD9">
    <property type="glycosylation" value="4 sites, 1 N-linked glycan (1 site), 1 O-linked glycan (2 sites)"/>
</dbReference>
<dbReference type="iPTMnet" id="Q8BGD9"/>
<dbReference type="PhosphoSitePlus" id="Q8BGD9"/>
<dbReference type="SwissPalm" id="Q8BGD9"/>
<dbReference type="CPTAC" id="non-CPTAC-3827"/>
<dbReference type="jPOST" id="Q8BGD9"/>
<dbReference type="PaxDb" id="10090-ENSMUSP00000127774"/>
<dbReference type="ProteomicsDB" id="267262"/>
<dbReference type="Pumba" id="Q8BGD9"/>
<dbReference type="Antibodypedia" id="3427">
    <property type="antibodies" value="807 antibodies from 42 providers"/>
</dbReference>
<dbReference type="DNASU" id="75705"/>
<dbReference type="Ensembl" id="ENSMUST00000169681.3">
    <property type="protein sequence ID" value="ENSMUSP00000127774.2"/>
    <property type="gene ID" value="ENSMUSG00000058655.10"/>
</dbReference>
<dbReference type="GeneID" id="75705"/>
<dbReference type="KEGG" id="mmu:75705"/>
<dbReference type="UCSC" id="uc007xuk.2">
    <property type="organism name" value="mouse"/>
</dbReference>
<dbReference type="AGR" id="MGI:95304"/>
<dbReference type="CTD" id="1975"/>
<dbReference type="MGI" id="MGI:95304">
    <property type="gene designation" value="Eif4b"/>
</dbReference>
<dbReference type="VEuPathDB" id="HostDB:ENSMUSG00000058655"/>
<dbReference type="eggNOG" id="KOG0118">
    <property type="taxonomic scope" value="Eukaryota"/>
</dbReference>
<dbReference type="GeneTree" id="ENSGT00940000153336"/>
<dbReference type="HOGENOM" id="CLU_031798_0_0_1"/>
<dbReference type="InParanoid" id="Q8BGD9"/>
<dbReference type="OMA" id="YSGNFDR"/>
<dbReference type="OrthoDB" id="1748655at2759"/>
<dbReference type="PhylomeDB" id="Q8BGD9"/>
<dbReference type="TreeFam" id="TF101525"/>
<dbReference type="Reactome" id="R-MMU-156827">
    <property type="pathway name" value="L13a-mediated translational silencing of Ceruloplasmin expression"/>
</dbReference>
<dbReference type="Reactome" id="R-MMU-166208">
    <property type="pathway name" value="mTORC1-mediated signalling"/>
</dbReference>
<dbReference type="Reactome" id="R-MMU-429947">
    <property type="pathway name" value="Deadenylation of mRNA"/>
</dbReference>
<dbReference type="Reactome" id="R-MMU-72649">
    <property type="pathway name" value="Translation initiation complex formation"/>
</dbReference>
<dbReference type="Reactome" id="R-MMU-72662">
    <property type="pathway name" value="Activation of the mRNA upon binding of the cap-binding complex and eIFs, and subsequent binding to 43S"/>
</dbReference>
<dbReference type="Reactome" id="R-MMU-72702">
    <property type="pathway name" value="Ribosomal scanning and start codon recognition"/>
</dbReference>
<dbReference type="Reactome" id="R-MMU-72706">
    <property type="pathway name" value="GTP hydrolysis and joining of the 60S ribosomal subunit"/>
</dbReference>
<dbReference type="BioGRID-ORCS" id="75705">
    <property type="hits" value="12 hits in 78 CRISPR screens"/>
</dbReference>
<dbReference type="ChiTaRS" id="Eif4b">
    <property type="organism name" value="mouse"/>
</dbReference>
<dbReference type="PRO" id="PR:Q8BGD9"/>
<dbReference type="Proteomes" id="UP000000589">
    <property type="component" value="Chromosome 15"/>
</dbReference>
<dbReference type="RNAct" id="Q8BGD9">
    <property type="molecule type" value="protein"/>
</dbReference>
<dbReference type="Bgee" id="ENSMUSG00000058655">
    <property type="expression patterns" value="Expressed in embryonic post-anal tail and 263 other cell types or tissues"/>
</dbReference>
<dbReference type="ExpressionAtlas" id="Q8BGD9">
    <property type="expression patterns" value="baseline and differential"/>
</dbReference>
<dbReference type="GO" id="GO:0005829">
    <property type="term" value="C:cytosol"/>
    <property type="evidence" value="ECO:0000304"/>
    <property type="project" value="Reactome"/>
</dbReference>
<dbReference type="GO" id="GO:0030425">
    <property type="term" value="C:dendrite"/>
    <property type="evidence" value="ECO:0007669"/>
    <property type="project" value="Ensembl"/>
</dbReference>
<dbReference type="GO" id="GO:0043025">
    <property type="term" value="C:neuronal cell body"/>
    <property type="evidence" value="ECO:0007669"/>
    <property type="project" value="Ensembl"/>
</dbReference>
<dbReference type="GO" id="GO:0098794">
    <property type="term" value="C:postsynapse"/>
    <property type="evidence" value="ECO:0007669"/>
    <property type="project" value="Ensembl"/>
</dbReference>
<dbReference type="GO" id="GO:0003723">
    <property type="term" value="F:RNA binding"/>
    <property type="evidence" value="ECO:0007669"/>
    <property type="project" value="UniProtKB-KW"/>
</dbReference>
<dbReference type="GO" id="GO:0003743">
    <property type="term" value="F:translation initiation factor activity"/>
    <property type="evidence" value="ECO:0007669"/>
    <property type="project" value="UniProtKB-KW"/>
</dbReference>
<dbReference type="CDD" id="cd12402">
    <property type="entry name" value="RRM_eIF4B"/>
    <property type="match status" value="1"/>
</dbReference>
<dbReference type="FunFam" id="3.30.70.330:FF:000163">
    <property type="entry name" value="Eukaryotic translation initiation factor 4B"/>
    <property type="match status" value="1"/>
</dbReference>
<dbReference type="Gene3D" id="3.30.70.330">
    <property type="match status" value="1"/>
</dbReference>
<dbReference type="InterPro" id="IPR033107">
    <property type="entry name" value="EIF-4B_RRM"/>
</dbReference>
<dbReference type="InterPro" id="IPR012677">
    <property type="entry name" value="Nucleotide-bd_a/b_plait_sf"/>
</dbReference>
<dbReference type="InterPro" id="IPR035979">
    <property type="entry name" value="RBD_domain_sf"/>
</dbReference>
<dbReference type="InterPro" id="IPR000504">
    <property type="entry name" value="RRM_dom"/>
</dbReference>
<dbReference type="PANTHER" id="PTHR23236:SF2">
    <property type="entry name" value="EUKARYOTIC TRANSLATION INITIATION FACTOR 4B"/>
    <property type="match status" value="1"/>
</dbReference>
<dbReference type="PANTHER" id="PTHR23236">
    <property type="entry name" value="EUKARYOTIC TRANSLATION INITIATION FACTOR 4B/4H"/>
    <property type="match status" value="1"/>
</dbReference>
<dbReference type="Pfam" id="PF00076">
    <property type="entry name" value="RRM_1"/>
    <property type="match status" value="1"/>
</dbReference>
<dbReference type="SMART" id="SM00360">
    <property type="entry name" value="RRM"/>
    <property type="match status" value="1"/>
</dbReference>
<dbReference type="SUPFAM" id="SSF54928">
    <property type="entry name" value="RNA-binding domain, RBD"/>
    <property type="match status" value="1"/>
</dbReference>
<dbReference type="PROSITE" id="PS50102">
    <property type="entry name" value="RRM"/>
    <property type="match status" value="1"/>
</dbReference>
<name>IF4B_MOUSE</name>
<keyword id="KW-0007">Acetylation</keyword>
<keyword id="KW-0396">Initiation factor</keyword>
<keyword id="KW-1017">Isopeptide bond</keyword>
<keyword id="KW-0597">Phosphoprotein</keyword>
<keyword id="KW-0648">Protein biosynthesis</keyword>
<keyword id="KW-1185">Reference proteome</keyword>
<keyword id="KW-0694">RNA-binding</keyword>
<keyword id="KW-0832">Ubl conjugation</keyword>
<feature type="chain" id="PRO_0000081617" description="Eukaryotic translation initiation factor 4B">
    <location>
        <begin position="1"/>
        <end position="611"/>
    </location>
</feature>
<feature type="domain" description="RRM" evidence="3">
    <location>
        <begin position="96"/>
        <end position="173"/>
    </location>
</feature>
<feature type="region of interest" description="Disordered" evidence="4">
    <location>
        <begin position="1"/>
        <end position="93"/>
    </location>
</feature>
<feature type="region of interest" description="Disordered" evidence="4">
    <location>
        <begin position="173"/>
        <end position="611"/>
    </location>
</feature>
<feature type="compositionally biased region" description="Basic residues" evidence="4">
    <location>
        <begin position="1"/>
        <end position="13"/>
    </location>
</feature>
<feature type="compositionally biased region" description="Basic and acidic residues" evidence="4">
    <location>
        <begin position="79"/>
        <end position="89"/>
    </location>
</feature>
<feature type="compositionally biased region" description="Basic and acidic residues" evidence="4">
    <location>
        <begin position="173"/>
        <end position="203"/>
    </location>
</feature>
<feature type="compositionally biased region" description="Basic and acidic residues" evidence="4">
    <location>
        <begin position="211"/>
        <end position="271"/>
    </location>
</feature>
<feature type="compositionally biased region" description="Basic and acidic residues" evidence="4">
    <location>
        <begin position="285"/>
        <end position="328"/>
    </location>
</feature>
<feature type="compositionally biased region" description="Low complexity" evidence="4">
    <location>
        <begin position="348"/>
        <end position="359"/>
    </location>
</feature>
<feature type="compositionally biased region" description="Basic and acidic residues" evidence="4">
    <location>
        <begin position="370"/>
        <end position="420"/>
    </location>
</feature>
<feature type="compositionally biased region" description="Basic and acidic residues" evidence="4">
    <location>
        <begin position="439"/>
        <end position="458"/>
    </location>
</feature>
<feature type="compositionally biased region" description="Polar residues" evidence="4">
    <location>
        <begin position="487"/>
        <end position="506"/>
    </location>
</feature>
<feature type="compositionally biased region" description="Basic and acidic residues" evidence="4">
    <location>
        <begin position="551"/>
        <end position="583"/>
    </location>
</feature>
<feature type="compositionally biased region" description="Low complexity" evidence="4">
    <location>
        <begin position="584"/>
        <end position="597"/>
    </location>
</feature>
<feature type="compositionally biased region" description="Acidic residues" evidence="4">
    <location>
        <begin position="599"/>
        <end position="611"/>
    </location>
</feature>
<feature type="modified residue" description="Phosphoserine" evidence="5">
    <location>
        <position position="93"/>
    </location>
</feature>
<feature type="modified residue" description="Phosphoserine" evidence="2">
    <location>
        <position position="192"/>
    </location>
</feature>
<feature type="modified residue" description="Phosphoserine" evidence="2">
    <location>
        <position position="207"/>
    </location>
</feature>
<feature type="modified residue" description="Phosphoserine" evidence="2">
    <location>
        <position position="219"/>
    </location>
</feature>
<feature type="modified residue" description="Phosphoserine" evidence="2">
    <location>
        <position position="283"/>
    </location>
</feature>
<feature type="modified residue" description="Phosphoserine" evidence="2">
    <location>
        <position position="359"/>
    </location>
</feature>
<feature type="modified residue" description="N6-acetyllysine" evidence="10">
    <location>
        <position position="365"/>
    </location>
</feature>
<feature type="modified residue" description="Phosphoserine; by RPS6KA1" evidence="8">
    <location>
        <position position="406"/>
    </location>
</feature>
<feature type="modified residue" description="Phosphoserine" evidence="2">
    <location>
        <position position="409"/>
    </location>
</feature>
<feature type="modified residue" description="Phosphothreonine" evidence="2">
    <location>
        <position position="412"/>
    </location>
</feature>
<feature type="modified residue" description="Phosphoserine" evidence="2">
    <location>
        <position position="418"/>
    </location>
</feature>
<feature type="modified residue" description="Phosphoserine; by RPS6KA1" evidence="9">
    <location>
        <position position="422"/>
    </location>
</feature>
<feature type="modified residue" description="Phosphoserine" evidence="9">
    <location>
        <position position="425"/>
    </location>
</feature>
<feature type="modified residue" description="Phosphoserine" evidence="2">
    <location>
        <position position="445"/>
    </location>
</feature>
<feature type="modified residue" description="Phosphoserine" evidence="2">
    <location>
        <position position="459"/>
    </location>
</feature>
<feature type="modified residue" description="Phosphoserine" evidence="2">
    <location>
        <position position="462"/>
    </location>
</feature>
<feature type="modified residue" description="Phosphoserine" evidence="9">
    <location>
        <position position="497"/>
    </location>
</feature>
<feature type="modified residue" description="Phosphoserine" evidence="6 9">
    <location>
        <position position="498"/>
    </location>
</feature>
<feature type="modified residue" description="Phosphothreonine" evidence="9">
    <location>
        <position position="500"/>
    </location>
</feature>
<feature type="modified residue" description="Phosphoserine" evidence="9">
    <location>
        <position position="504"/>
    </location>
</feature>
<feature type="modified residue" description="Phosphothreonine" evidence="9">
    <location>
        <position position="506"/>
    </location>
</feature>
<feature type="modified residue" description="N6-acetyllysine" evidence="2">
    <location>
        <position position="586"/>
    </location>
</feature>
<feature type="modified residue" description="Phosphoserine" evidence="5 7 9">
    <location>
        <position position="597"/>
    </location>
</feature>
<feature type="cross-link" description="Glycyl lysine isopeptide (Lys-Gly) (interchain with G-Cter in SUMO2)" evidence="2">
    <location>
        <position position="343"/>
    </location>
</feature>
<protein>
    <recommendedName>
        <fullName>Eukaryotic translation initiation factor 4B</fullName>
        <shortName>eIF-4B</shortName>
    </recommendedName>
</protein>
<reference key="1">
    <citation type="journal article" date="2005" name="Science">
        <title>The transcriptional landscape of the mammalian genome.</title>
        <authorList>
            <person name="Carninci P."/>
            <person name="Kasukawa T."/>
            <person name="Katayama S."/>
            <person name="Gough J."/>
            <person name="Frith M.C."/>
            <person name="Maeda N."/>
            <person name="Oyama R."/>
            <person name="Ravasi T."/>
            <person name="Lenhard B."/>
            <person name="Wells C."/>
            <person name="Kodzius R."/>
            <person name="Shimokawa K."/>
            <person name="Bajic V.B."/>
            <person name="Brenner S.E."/>
            <person name="Batalov S."/>
            <person name="Forrest A.R."/>
            <person name="Zavolan M."/>
            <person name="Davis M.J."/>
            <person name="Wilming L.G."/>
            <person name="Aidinis V."/>
            <person name="Allen J.E."/>
            <person name="Ambesi-Impiombato A."/>
            <person name="Apweiler R."/>
            <person name="Aturaliya R.N."/>
            <person name="Bailey T.L."/>
            <person name="Bansal M."/>
            <person name="Baxter L."/>
            <person name="Beisel K.W."/>
            <person name="Bersano T."/>
            <person name="Bono H."/>
            <person name="Chalk A.M."/>
            <person name="Chiu K.P."/>
            <person name="Choudhary V."/>
            <person name="Christoffels A."/>
            <person name="Clutterbuck D.R."/>
            <person name="Crowe M.L."/>
            <person name="Dalla E."/>
            <person name="Dalrymple B.P."/>
            <person name="de Bono B."/>
            <person name="Della Gatta G."/>
            <person name="di Bernardo D."/>
            <person name="Down T."/>
            <person name="Engstrom P."/>
            <person name="Fagiolini M."/>
            <person name="Faulkner G."/>
            <person name="Fletcher C.F."/>
            <person name="Fukushima T."/>
            <person name="Furuno M."/>
            <person name="Futaki S."/>
            <person name="Gariboldi M."/>
            <person name="Georgii-Hemming P."/>
            <person name="Gingeras T.R."/>
            <person name="Gojobori T."/>
            <person name="Green R.E."/>
            <person name="Gustincich S."/>
            <person name="Harbers M."/>
            <person name="Hayashi Y."/>
            <person name="Hensch T.K."/>
            <person name="Hirokawa N."/>
            <person name="Hill D."/>
            <person name="Huminiecki L."/>
            <person name="Iacono M."/>
            <person name="Ikeo K."/>
            <person name="Iwama A."/>
            <person name="Ishikawa T."/>
            <person name="Jakt M."/>
            <person name="Kanapin A."/>
            <person name="Katoh M."/>
            <person name="Kawasawa Y."/>
            <person name="Kelso J."/>
            <person name="Kitamura H."/>
            <person name="Kitano H."/>
            <person name="Kollias G."/>
            <person name="Krishnan S.P."/>
            <person name="Kruger A."/>
            <person name="Kummerfeld S.K."/>
            <person name="Kurochkin I.V."/>
            <person name="Lareau L.F."/>
            <person name="Lazarevic D."/>
            <person name="Lipovich L."/>
            <person name="Liu J."/>
            <person name="Liuni S."/>
            <person name="McWilliam S."/>
            <person name="Madan Babu M."/>
            <person name="Madera M."/>
            <person name="Marchionni L."/>
            <person name="Matsuda H."/>
            <person name="Matsuzawa S."/>
            <person name="Miki H."/>
            <person name="Mignone F."/>
            <person name="Miyake S."/>
            <person name="Morris K."/>
            <person name="Mottagui-Tabar S."/>
            <person name="Mulder N."/>
            <person name="Nakano N."/>
            <person name="Nakauchi H."/>
            <person name="Ng P."/>
            <person name="Nilsson R."/>
            <person name="Nishiguchi S."/>
            <person name="Nishikawa S."/>
            <person name="Nori F."/>
            <person name="Ohara O."/>
            <person name="Okazaki Y."/>
            <person name="Orlando V."/>
            <person name="Pang K.C."/>
            <person name="Pavan W.J."/>
            <person name="Pavesi G."/>
            <person name="Pesole G."/>
            <person name="Petrovsky N."/>
            <person name="Piazza S."/>
            <person name="Reed J."/>
            <person name="Reid J.F."/>
            <person name="Ring B.Z."/>
            <person name="Ringwald M."/>
            <person name="Rost B."/>
            <person name="Ruan Y."/>
            <person name="Salzberg S.L."/>
            <person name="Sandelin A."/>
            <person name="Schneider C."/>
            <person name="Schoenbach C."/>
            <person name="Sekiguchi K."/>
            <person name="Semple C.A."/>
            <person name="Seno S."/>
            <person name="Sessa L."/>
            <person name="Sheng Y."/>
            <person name="Shibata Y."/>
            <person name="Shimada H."/>
            <person name="Shimada K."/>
            <person name="Silva D."/>
            <person name="Sinclair B."/>
            <person name="Sperling S."/>
            <person name="Stupka E."/>
            <person name="Sugiura K."/>
            <person name="Sultana R."/>
            <person name="Takenaka Y."/>
            <person name="Taki K."/>
            <person name="Tammoja K."/>
            <person name="Tan S.L."/>
            <person name="Tang S."/>
            <person name="Taylor M.S."/>
            <person name="Tegner J."/>
            <person name="Teichmann S.A."/>
            <person name="Ueda H.R."/>
            <person name="van Nimwegen E."/>
            <person name="Verardo R."/>
            <person name="Wei C.L."/>
            <person name="Yagi K."/>
            <person name="Yamanishi H."/>
            <person name="Zabarovsky E."/>
            <person name="Zhu S."/>
            <person name="Zimmer A."/>
            <person name="Hide W."/>
            <person name="Bult C."/>
            <person name="Grimmond S.M."/>
            <person name="Teasdale R.D."/>
            <person name="Liu E.T."/>
            <person name="Brusic V."/>
            <person name="Quackenbush J."/>
            <person name="Wahlestedt C."/>
            <person name="Mattick J.S."/>
            <person name="Hume D.A."/>
            <person name="Kai C."/>
            <person name="Sasaki D."/>
            <person name="Tomaru Y."/>
            <person name="Fukuda S."/>
            <person name="Kanamori-Katayama M."/>
            <person name="Suzuki M."/>
            <person name="Aoki J."/>
            <person name="Arakawa T."/>
            <person name="Iida J."/>
            <person name="Imamura K."/>
            <person name="Itoh M."/>
            <person name="Kato T."/>
            <person name="Kawaji H."/>
            <person name="Kawagashira N."/>
            <person name="Kawashima T."/>
            <person name="Kojima M."/>
            <person name="Kondo S."/>
            <person name="Konno H."/>
            <person name="Nakano K."/>
            <person name="Ninomiya N."/>
            <person name="Nishio T."/>
            <person name="Okada M."/>
            <person name="Plessy C."/>
            <person name="Shibata K."/>
            <person name="Shiraki T."/>
            <person name="Suzuki S."/>
            <person name="Tagami M."/>
            <person name="Waki K."/>
            <person name="Watahiki A."/>
            <person name="Okamura-Oho Y."/>
            <person name="Suzuki H."/>
            <person name="Kawai J."/>
            <person name="Hayashizaki Y."/>
        </authorList>
    </citation>
    <scope>NUCLEOTIDE SEQUENCE [LARGE SCALE MRNA]</scope>
    <source>
        <strain>C57BL/6J</strain>
        <strain>NOD</strain>
    </source>
</reference>
<reference key="2">
    <citation type="journal article" date="2004" name="Mol. Cell. Proteomics">
        <title>Phosphoproteomic analysis of the developing mouse brain.</title>
        <authorList>
            <person name="Ballif B.A."/>
            <person name="Villen J."/>
            <person name="Beausoleil S.A."/>
            <person name="Schwartz D."/>
            <person name="Gygi S.P."/>
        </authorList>
    </citation>
    <scope>PHOSPHORYLATION [LARGE SCALE ANALYSIS] AT SER-93 AND SER-597</scope>
    <scope>IDENTIFICATION BY MASS SPECTROMETRY [LARGE SCALE ANALYSIS]</scope>
    <source>
        <tissue>Embryonic brain</tissue>
    </source>
</reference>
<reference key="3">
    <citation type="journal article" date="2007" name="Proc. Natl. Acad. Sci. U.S.A.">
        <title>Large-scale phosphorylation analysis of mouse liver.</title>
        <authorList>
            <person name="Villen J."/>
            <person name="Beausoleil S.A."/>
            <person name="Gerber S.A."/>
            <person name="Gygi S.P."/>
        </authorList>
    </citation>
    <scope>PHOSPHORYLATION [LARGE SCALE ANALYSIS] AT SER-498</scope>
    <scope>IDENTIFICATION BY MASS SPECTROMETRY [LARGE SCALE ANALYSIS]</scope>
    <source>
        <tissue>Liver</tissue>
    </source>
</reference>
<reference key="4">
    <citation type="journal article" date="2008" name="J. Proteome Res.">
        <title>Specific phosphopeptide enrichment with immobilized titanium ion affinity chromatography adsorbent for phosphoproteome analysis.</title>
        <authorList>
            <person name="Zhou H."/>
            <person name="Ye M."/>
            <person name="Dong J."/>
            <person name="Han G."/>
            <person name="Jiang X."/>
            <person name="Wu R."/>
            <person name="Zou H."/>
        </authorList>
    </citation>
    <scope>PHOSPHORYLATION [LARGE SCALE ANALYSIS] AT SER-597</scope>
    <scope>IDENTIFICATION BY MASS SPECTROMETRY [LARGE SCALE ANALYSIS]</scope>
    <source>
        <tissue>Liver</tissue>
    </source>
</reference>
<reference key="5">
    <citation type="journal article" date="2009" name="Immunity">
        <title>The phagosomal proteome in interferon-gamma-activated macrophages.</title>
        <authorList>
            <person name="Trost M."/>
            <person name="English L."/>
            <person name="Lemieux S."/>
            <person name="Courcelles M."/>
            <person name="Desjardins M."/>
            <person name="Thibault P."/>
        </authorList>
    </citation>
    <scope>IDENTIFICATION BY MASS SPECTROMETRY [LARGE SCALE ANALYSIS]</scope>
</reference>
<reference key="6">
    <citation type="journal article" date="2009" name="Mol. Cell. Proteomics">
        <title>Large scale localization of protein phosphorylation by use of electron capture dissociation mass spectrometry.</title>
        <authorList>
            <person name="Sweet S.M."/>
            <person name="Bailey C.M."/>
            <person name="Cunningham D.L."/>
            <person name="Heath J.K."/>
            <person name="Cooper H.J."/>
        </authorList>
    </citation>
    <scope>PHOSPHORYLATION [LARGE SCALE ANALYSIS] AT SER-406</scope>
    <scope>IDENTIFICATION BY MASS SPECTROMETRY [LARGE SCALE ANALYSIS]</scope>
    <source>
        <tissue>Embryonic fibroblast</tissue>
    </source>
</reference>
<reference key="7">
    <citation type="journal article" date="2010" name="Cell">
        <title>A tissue-specific atlas of mouse protein phosphorylation and expression.</title>
        <authorList>
            <person name="Huttlin E.L."/>
            <person name="Jedrychowski M.P."/>
            <person name="Elias J.E."/>
            <person name="Goswami T."/>
            <person name="Rad R."/>
            <person name="Beausoleil S.A."/>
            <person name="Villen J."/>
            <person name="Haas W."/>
            <person name="Sowa M.E."/>
            <person name="Gygi S.P."/>
        </authorList>
    </citation>
    <scope>PHOSPHORYLATION [LARGE SCALE ANALYSIS] AT SER-422; SER-425; SER-497; SER-498; THR-500; SER-504; THR-506 AND SER-597</scope>
    <scope>IDENTIFICATION BY MASS SPECTROMETRY [LARGE SCALE ANALYSIS]</scope>
    <source>
        <tissue>Brain</tissue>
        <tissue>Brown adipose tissue</tissue>
        <tissue>Heart</tissue>
        <tissue>Kidney</tissue>
        <tissue>Liver</tissue>
        <tissue>Lung</tissue>
        <tissue>Pancreas</tissue>
        <tissue>Spleen</tissue>
        <tissue>Testis</tissue>
    </source>
</reference>
<reference key="8">
    <citation type="journal article" date="2013" name="Mol. Cell">
        <title>SIRT5-mediated lysine desuccinylation impacts diverse metabolic pathways.</title>
        <authorList>
            <person name="Park J."/>
            <person name="Chen Y."/>
            <person name="Tishkoff D.X."/>
            <person name="Peng C."/>
            <person name="Tan M."/>
            <person name="Dai L."/>
            <person name="Xie Z."/>
            <person name="Zhang Y."/>
            <person name="Zwaans B.M."/>
            <person name="Skinner M.E."/>
            <person name="Lombard D.B."/>
            <person name="Zhao Y."/>
        </authorList>
    </citation>
    <scope>ACETYLATION [LARGE SCALE ANALYSIS] AT LYS-365</scope>
    <scope>IDENTIFICATION BY MASS SPECTROMETRY [LARGE SCALE ANALYSIS]</scope>
    <source>
        <tissue>Embryonic fibroblast</tissue>
    </source>
</reference>
<reference key="9">
    <citation type="journal article" date="2014" name="Mol. Cell. Proteomics">
        <title>Immunoaffinity enrichment and mass spectrometry analysis of protein methylation.</title>
        <authorList>
            <person name="Guo A."/>
            <person name="Gu H."/>
            <person name="Zhou J."/>
            <person name="Mulhern D."/>
            <person name="Wang Y."/>
            <person name="Lee K.A."/>
            <person name="Yang V."/>
            <person name="Aguiar M."/>
            <person name="Kornhauser J."/>
            <person name="Jia X."/>
            <person name="Ren J."/>
            <person name="Beausoleil S.A."/>
            <person name="Silva J.C."/>
            <person name="Vemulapalli V."/>
            <person name="Bedford M.T."/>
            <person name="Comb M.J."/>
        </authorList>
    </citation>
    <scope>IDENTIFICATION BY MASS SPECTROMETRY [LARGE SCALE ANALYSIS]</scope>
    <source>
        <tissue>Brain</tissue>
    </source>
</reference>
<gene>
    <name type="primary">Eif4b</name>
</gene>
<comment type="function">
    <text evidence="1">Required for the binding of mRNA to ribosomes. Functions in close association with EIF4-F and EIF4-A. Binds near the 5'-terminal cap of mRNA in presence of EIF-4F and ATP. Promotes the ATPase activity and the ATP-dependent RNA unwinding activity of both EIF4-A and EIF4-F (By similarity).</text>
</comment>
<comment type="subunit">
    <text evidence="1">Self-associates and interacts with EIF3 p170 subunit.</text>
</comment>
<comment type="PTM">
    <text evidence="2">Phosphorylated at Ser-422 by RPS6KA1 and RPS6KB1; phosphorylation enhances the affinity of EIF4B for the EIF3 complex. In response to mTORC1 activation, RPS6KA1-mediated phosphorylation at 'Ser-406' and 'Ser-422' stimulates bicarbonate cotransporter SLC4A7 mRNA translation, increasing SLC4A7 protein abundance and function.</text>
</comment>
<accession>Q8BGD9</accession>
<accession>Q3TD64</accession>
<evidence type="ECO:0000250" key="1"/>
<evidence type="ECO:0000250" key="2">
    <source>
        <dbReference type="UniProtKB" id="P23588"/>
    </source>
</evidence>
<evidence type="ECO:0000255" key="3">
    <source>
        <dbReference type="PROSITE-ProRule" id="PRU00176"/>
    </source>
</evidence>
<evidence type="ECO:0000256" key="4">
    <source>
        <dbReference type="SAM" id="MobiDB-lite"/>
    </source>
</evidence>
<evidence type="ECO:0007744" key="5">
    <source>
    </source>
</evidence>
<evidence type="ECO:0007744" key="6">
    <source>
    </source>
</evidence>
<evidence type="ECO:0007744" key="7">
    <source>
    </source>
</evidence>
<evidence type="ECO:0007744" key="8">
    <source>
    </source>
</evidence>
<evidence type="ECO:0007744" key="9">
    <source>
    </source>
</evidence>
<evidence type="ECO:0007744" key="10">
    <source>
    </source>
</evidence>
<organism>
    <name type="scientific">Mus musculus</name>
    <name type="common">Mouse</name>
    <dbReference type="NCBI Taxonomy" id="10090"/>
    <lineage>
        <taxon>Eukaryota</taxon>
        <taxon>Metazoa</taxon>
        <taxon>Chordata</taxon>
        <taxon>Craniata</taxon>
        <taxon>Vertebrata</taxon>
        <taxon>Euteleostomi</taxon>
        <taxon>Mammalia</taxon>
        <taxon>Eutheria</taxon>
        <taxon>Euarchontoglires</taxon>
        <taxon>Glires</taxon>
        <taxon>Rodentia</taxon>
        <taxon>Myomorpha</taxon>
        <taxon>Muroidea</taxon>
        <taxon>Muridae</taxon>
        <taxon>Murinae</taxon>
        <taxon>Mus</taxon>
        <taxon>Mus</taxon>
    </lineage>
</organism>
<sequence>MAASAKKKNKKGKTISLTDFLAEDGGTGGGSTYVPKPVSWADETDDLEGDVSTTWHSNDDDVYRAPPIDRSILPTAPRAAREPNIDRSRLPKSPPYTAFLGNLPYDVTEDSIKDFFRGLNISAVRLPREPSNPDRLKGFGYAEFEDLDSLLSALSLNEESLGNRRIRVDVADQAQDKDRDDRSFGRDRNRDSDKTDTDWRARPTTDSFDDYPPRRGDDSFGDKYRDRYDSDRYRDGYRDGYRDGPRRDMDRYGGRDRYDDRGSRDYDRGYDSRIGSGRRAFGSGYRRDDDYRGGGDRYEDRYDRRDDRSWSSRDDYSRDDYRRDDRGPPQRPRLNLKPRSAPKEDDASASTSQSSRAASIFGGAKPVDTAAREREVEERLQKEQEKLQRQLDEPKLDRRPRERHPSWRSEETQERERSRTGSESSQTGASATSGRNTRRRESEKSLENETLNKEEDCHSPTSKPPKPDQPLKVMPAPPPKENAWVKRSSNPPARSQSSDTEQPSPTSGGGKVAAVQPPEEGPSRKDGNKVDVVGATQGQAGSCSRGPGDGGSRDHWKDLDRKDGKKDQDSRSAPEPKKPEENPASKFSSASKYAALSVDGEDEDEGDDCTE</sequence>
<proteinExistence type="evidence at protein level"/>